<organism>
    <name type="scientific">Cupriavidus necator (strain ATCC 17699 / DSM 428 / KCTC 22496 / NCIMB 10442 / H16 / Stanier 337)</name>
    <name type="common">Ralstonia eutropha</name>
    <dbReference type="NCBI Taxonomy" id="381666"/>
    <lineage>
        <taxon>Bacteria</taxon>
        <taxon>Pseudomonadati</taxon>
        <taxon>Pseudomonadota</taxon>
        <taxon>Betaproteobacteria</taxon>
        <taxon>Burkholderiales</taxon>
        <taxon>Burkholderiaceae</taxon>
        <taxon>Cupriavidus</taxon>
    </lineage>
</organism>
<gene>
    <name type="primary">napB</name>
    <name type="ordered locus">PHG212</name>
</gene>
<evidence type="ECO:0000269" key="1">
    <source>
    </source>
</evidence>
<evidence type="ECO:0000269" key="2">
    <source>
    </source>
</evidence>
<evidence type="ECO:0000269" key="3">
    <source>
    </source>
</evidence>
<evidence type="ECO:0000305" key="4"/>
<evidence type="ECO:0007744" key="5">
    <source>
        <dbReference type="PDB" id="3ML1"/>
    </source>
</evidence>
<evidence type="ECO:0007744" key="6">
    <source>
        <dbReference type="PDB" id="3O5A"/>
    </source>
</evidence>
<evidence type="ECO:0007829" key="7">
    <source>
        <dbReference type="PDB" id="3ML1"/>
    </source>
</evidence>
<feature type="signal peptide" evidence="3">
    <location>
        <begin position="1"/>
        <end position="35"/>
    </location>
</feature>
<feature type="chain" id="PRO_0000006587" description="Periplasmic nitrate reductase, electron transfer subunit">
    <location>
        <begin position="36"/>
        <end position="169"/>
    </location>
</feature>
<feature type="binding site" description="axial binding residue" evidence="2 5">
    <location>
        <position position="79"/>
    </location>
    <ligand>
        <name>heme c</name>
        <dbReference type="ChEBI" id="CHEBI:61717"/>
        <label>1</label>
    </ligand>
    <ligandPart>
        <name>Fe</name>
        <dbReference type="ChEBI" id="CHEBI:18248"/>
    </ligandPart>
</feature>
<feature type="binding site" description="covalent" evidence="2 5">
    <location>
        <position position="93"/>
    </location>
    <ligand>
        <name>heme c</name>
        <dbReference type="ChEBI" id="CHEBI:61717"/>
        <label>1</label>
    </ligand>
</feature>
<feature type="binding site" description="covalent" evidence="2 5">
    <location>
        <position position="96"/>
    </location>
    <ligand>
        <name>heme c</name>
        <dbReference type="ChEBI" id="CHEBI:61717"/>
        <label>1</label>
    </ligand>
</feature>
<feature type="binding site" description="axial binding residue" evidence="2 5">
    <location>
        <position position="97"/>
    </location>
    <ligand>
        <name>heme c</name>
        <dbReference type="ChEBI" id="CHEBI:61717"/>
        <label>1</label>
    </ligand>
    <ligandPart>
        <name>Fe</name>
        <dbReference type="ChEBI" id="CHEBI:18248"/>
    </ligandPart>
</feature>
<feature type="binding site" description="axial binding residue" evidence="2 5">
    <location>
        <position position="114"/>
    </location>
    <ligand>
        <name>heme c</name>
        <dbReference type="ChEBI" id="CHEBI:61717"/>
        <label>2</label>
    </ligand>
    <ligandPart>
        <name>Fe</name>
        <dbReference type="ChEBI" id="CHEBI:18248"/>
    </ligandPart>
</feature>
<feature type="binding site" description="covalent" evidence="2 5">
    <location>
        <position position="133"/>
    </location>
    <ligand>
        <name>heme c</name>
        <dbReference type="ChEBI" id="CHEBI:61717"/>
        <label>2</label>
    </ligand>
</feature>
<feature type="binding site" description="covalent" evidence="2 5">
    <location>
        <position position="136"/>
    </location>
    <ligand>
        <name>heme c</name>
        <dbReference type="ChEBI" id="CHEBI:61717"/>
        <label>2</label>
    </ligand>
</feature>
<feature type="binding site" description="axial binding residue" evidence="2 5">
    <location>
        <position position="137"/>
    </location>
    <ligand>
        <name>heme c</name>
        <dbReference type="ChEBI" id="CHEBI:61717"/>
        <label>2</label>
    </ligand>
    <ligandPart>
        <name>Fe</name>
        <dbReference type="ChEBI" id="CHEBI:18248"/>
    </ligandPart>
</feature>
<feature type="turn" evidence="7">
    <location>
        <begin position="40"/>
        <end position="42"/>
    </location>
</feature>
<feature type="strand" evidence="7">
    <location>
        <begin position="77"/>
        <end position="79"/>
    </location>
</feature>
<feature type="helix" evidence="7">
    <location>
        <begin position="92"/>
        <end position="97"/>
    </location>
</feature>
<feature type="helix" evidence="7">
    <location>
        <begin position="112"/>
        <end position="115"/>
    </location>
</feature>
<feature type="helix" evidence="7">
    <location>
        <begin position="128"/>
        <end position="131"/>
    </location>
</feature>
<feature type="helix" evidence="7">
    <location>
        <begin position="133"/>
        <end position="135"/>
    </location>
</feature>
<feature type="strand" evidence="7">
    <location>
        <begin position="141"/>
        <end position="143"/>
    </location>
</feature>
<feature type="helix" evidence="7">
    <location>
        <begin position="154"/>
        <end position="157"/>
    </location>
</feature>
<comment type="function">
    <text evidence="3">Electron transfer subunit of the periplasmic nitrate reductase complex NapAB. Receives electrons from the membrane-anchored tetraheme c-type NapC protein and transfers these to NapA subunit, thus allowing electron flow between membrane and periplasm. Essential for periplasmic nitrate reduction with nitrate as the terminal electron acceptor.</text>
</comment>
<comment type="subunit">
    <text evidence="1 2 3">Component of the periplasmic nitrate reductase NapAB complex composed of NapA and NapB.</text>
</comment>
<comment type="subcellular location">
    <subcellularLocation>
        <location evidence="1 2">Periplasm</location>
    </subcellularLocation>
</comment>
<comment type="induction">
    <text>Expressed independently of nitrate induction and anaerobiosis.</text>
</comment>
<comment type="PTM">
    <text>Binds 2 heme C groups per subunit.</text>
</comment>
<comment type="similarity">
    <text evidence="4">Belongs to the NapB family.</text>
</comment>
<dbReference type="EMBL" id="X71385">
    <property type="protein sequence ID" value="CAA50508.1"/>
    <property type="molecule type" value="Genomic_DNA"/>
</dbReference>
<dbReference type="EMBL" id="AY305378">
    <property type="protein sequence ID" value="AAP85964.1"/>
    <property type="molecule type" value="Genomic_DNA"/>
</dbReference>
<dbReference type="PIR" id="B48489">
    <property type="entry name" value="B48489"/>
</dbReference>
<dbReference type="RefSeq" id="WP_011154127.1">
    <property type="nucleotide sequence ID" value="NC_005241.1"/>
</dbReference>
<dbReference type="PDB" id="3ML1">
    <property type="method" value="X-ray"/>
    <property type="resolution" value="1.60 A"/>
    <property type="chains" value="B=35-169"/>
</dbReference>
<dbReference type="PDB" id="3O5A">
    <property type="method" value="X-ray"/>
    <property type="resolution" value="1.72 A"/>
    <property type="chains" value="B=35-169"/>
</dbReference>
<dbReference type="PDBsum" id="3ML1"/>
<dbReference type="PDBsum" id="3O5A"/>
<dbReference type="SMR" id="P39186"/>
<dbReference type="KEGG" id="reh:PHG212"/>
<dbReference type="PATRIC" id="fig|381666.6.peg.160"/>
<dbReference type="eggNOG" id="COG3043">
    <property type="taxonomic scope" value="Bacteria"/>
</dbReference>
<dbReference type="HOGENOM" id="CLU_103367_2_0_4"/>
<dbReference type="OrthoDB" id="13290at2"/>
<dbReference type="EvolutionaryTrace" id="P39186"/>
<dbReference type="Proteomes" id="UP000008210">
    <property type="component" value="Plasmid megaplasmid pHG1"/>
</dbReference>
<dbReference type="GO" id="GO:0042597">
    <property type="term" value="C:periplasmic space"/>
    <property type="evidence" value="ECO:0007669"/>
    <property type="project" value="UniProtKB-SubCell"/>
</dbReference>
<dbReference type="GO" id="GO:0046872">
    <property type="term" value="F:metal ion binding"/>
    <property type="evidence" value="ECO:0007669"/>
    <property type="project" value="UniProtKB-KW"/>
</dbReference>
<dbReference type="GO" id="GO:0009061">
    <property type="term" value="P:anaerobic respiration"/>
    <property type="evidence" value="ECO:0007669"/>
    <property type="project" value="InterPro"/>
</dbReference>
<dbReference type="FunFam" id="1.10.1130.10:FF:000001">
    <property type="entry name" value="Periplasmic nitrate reductase, electron transfer subunit"/>
    <property type="match status" value="1"/>
</dbReference>
<dbReference type="Gene3D" id="1.10.1130.10">
    <property type="entry name" value="Flavocytochrome C3, Chain A"/>
    <property type="match status" value="1"/>
</dbReference>
<dbReference type="InterPro" id="IPR036280">
    <property type="entry name" value="Multihaem_cyt_sf"/>
</dbReference>
<dbReference type="InterPro" id="IPR005591">
    <property type="entry name" value="NapB"/>
</dbReference>
<dbReference type="PANTHER" id="PTHR38604">
    <property type="entry name" value="PERIPLASMIC NITRATE REDUCTASE, ELECTRON TRANSFER SUBUNIT"/>
    <property type="match status" value="1"/>
</dbReference>
<dbReference type="PANTHER" id="PTHR38604:SF1">
    <property type="entry name" value="PERIPLASMIC NITRATE REDUCTASE, ELECTRON TRANSFER SUBUNIT"/>
    <property type="match status" value="1"/>
</dbReference>
<dbReference type="Pfam" id="PF03892">
    <property type="entry name" value="NapB"/>
    <property type="match status" value="1"/>
</dbReference>
<dbReference type="PIRSF" id="PIRSF006105">
    <property type="entry name" value="NapB"/>
    <property type="match status" value="1"/>
</dbReference>
<dbReference type="SUPFAM" id="SSF48695">
    <property type="entry name" value="Multiheme cytochromes"/>
    <property type="match status" value="1"/>
</dbReference>
<dbReference type="PROSITE" id="PS51008">
    <property type="entry name" value="MULTIHEME_CYTC"/>
    <property type="match status" value="1"/>
</dbReference>
<accession>P39186</accession>
<proteinExistence type="evidence at protein level"/>
<protein>
    <recommendedName>
        <fullName>Periplasmic nitrate reductase, electron transfer subunit</fullName>
    </recommendedName>
    <alternativeName>
        <fullName>Diheme cytochrome c NapB</fullName>
    </alternativeName>
</protein>
<keyword id="KW-0002">3D-structure</keyword>
<keyword id="KW-0903">Direct protein sequencing</keyword>
<keyword id="KW-0249">Electron transport</keyword>
<keyword id="KW-0349">Heme</keyword>
<keyword id="KW-0408">Iron</keyword>
<keyword id="KW-0479">Metal-binding</keyword>
<keyword id="KW-0574">Periplasm</keyword>
<keyword id="KW-0614">Plasmid</keyword>
<keyword id="KW-1185">Reference proteome</keyword>
<keyword id="KW-0732">Signal</keyword>
<keyword id="KW-0813">Transport</keyword>
<sequence length="169" mass="18924">MKPSRSWASLLAVCAVLLAALAMQAIFFPAPARAQGLVDAMRGPTAIANEPRAPLLYPTENKDIRRTRNYTMQPPTIPHKIDGYQLDKDFNRCMFCHARTRTEETQAIPVSITHYMDRDNNVLADVSPRRYFCTQCHVPQADTKPLIGNNFVDVDTILKRRPGAKGAAK</sequence>
<name>NAPB_CUPNH</name>
<reference key="1">
    <citation type="journal article" date="1993" name="J. Bacteriol.">
        <title>Structure and function of a periplasmic nitrate reductase in Alcaligenes eutrophus H16.</title>
        <authorList>
            <person name="Siddiqui R.A."/>
            <person name="Warnecke-Eberz U."/>
            <person name="Hengsberger A."/>
            <person name="Schneider B."/>
            <person name="Kostka S."/>
            <person name="Friedrich B."/>
        </authorList>
    </citation>
    <scope>NUCLEOTIDE SEQUENCE [GENOMIC DNA]</scope>
    <scope>PROTEIN SEQUENCE OF 36-50</scope>
    <scope>FUNCTION</scope>
    <scope>SUBUNIT</scope>
    <source>
        <strain>ATCC 17699 / DSM 428 / KCTC 22496 / NCIMB 10442 / H16 / Stanier 337</strain>
        <plasmid>megaplasmid pHG1</plasmid>
    </source>
</reference>
<reference key="2">
    <citation type="journal article" date="2003" name="J. Mol. Biol.">
        <title>Complete nucleotide sequence of pHG1: a Ralstonia eutropha H16 megaplasmid encoding key enzymes of H(2)-based lithoautotrophy and anaerobiosis.</title>
        <authorList>
            <person name="Schwartz E."/>
            <person name="Henne A."/>
            <person name="Cramm R."/>
            <person name="Eitinger T."/>
            <person name="Friedrich B."/>
            <person name="Gottschalk G."/>
        </authorList>
    </citation>
    <scope>NUCLEOTIDE SEQUENCE [LARGE SCALE GENOMIC DNA]</scope>
    <source>
        <strain>ATCC 17699 / DSM 428 / KCTC 22496 / NCIMB 10442 / H16 / Stanier 337</strain>
    </source>
</reference>
<reference key="3">
    <citation type="journal article" date="2007" name="Acta Crystallogr. F">
        <title>Heterodimeric nitrate reductase (NapAB) from Cupriavidus necator H16: purification, crystallization and preliminary X-ray analysis.</title>
        <authorList>
            <person name="Coelho C."/>
            <person name="Gonzalez P.J."/>
            <person name="Trincao J."/>
            <person name="Carvalho A.L."/>
            <person name="Najmudin S."/>
            <person name="Hettman T."/>
            <person name="Dieckman S."/>
            <person name="Moura J.J."/>
            <person name="Moura I."/>
            <person name="Romao M.J."/>
        </authorList>
    </citation>
    <scope>CRYSTALLIZATION</scope>
    <scope>SUBUNIT</scope>
    <scope>SUBCELLULAR LOCATION</scope>
    <scope>PTM</scope>
    <source>
        <strain>ATCC 17699 / DSM 428 / KCTC 22496 / NCIMB 10442 / H16 / Stanier 337</strain>
        <plasmid>megaplasmid pHG1</plasmid>
    </source>
</reference>
<reference evidence="5 6" key="4">
    <citation type="journal article" date="2011" name="J. Mol. Biol.">
        <title>The crystal structure of Cupriavidus necator nitrate reductase in oxidized and partially reduced states.</title>
        <authorList>
            <person name="Coelho C."/>
            <person name="Gonzalez P.J."/>
            <person name="Moura J.G."/>
            <person name="Moura I."/>
            <person name="Trincao J."/>
            <person name="Joao Romao M."/>
        </authorList>
    </citation>
    <scope>X-RAY CRYSTALLOGRAPHY (1.60 ANGSTROMS) OF 35-169 IN COMPLEX WITH NAPA AND HEME C</scope>
    <scope>EPR SPECTROSCOPY</scope>
    <scope>ABSORPTION SPECTROSCOPY</scope>
    <scope>SUBUNIT</scope>
    <scope>SUBCELLULAR LOCATION</scope>
    <scope>PTM</scope>
    <source>
        <strain>ATCC 17699 / DSM 428 / KCTC 22496 / NCIMB 10442 / H16 / Stanier 337</strain>
        <plasmid>megaplasmid pHG1</plasmid>
    </source>
</reference>
<geneLocation type="plasmid">
    <name>megaplasmid pHG1</name>
</geneLocation>